<name>CDK1_CAEEL</name>
<organism>
    <name type="scientific">Caenorhabditis elegans</name>
    <dbReference type="NCBI Taxonomy" id="6239"/>
    <lineage>
        <taxon>Eukaryota</taxon>
        <taxon>Metazoa</taxon>
        <taxon>Ecdysozoa</taxon>
        <taxon>Nematoda</taxon>
        <taxon>Chromadorea</taxon>
        <taxon>Rhabditida</taxon>
        <taxon>Rhabditina</taxon>
        <taxon>Rhabditomorpha</taxon>
        <taxon>Rhabditoidea</taxon>
        <taxon>Rhabditidae</taxon>
        <taxon>Peloderinae</taxon>
        <taxon>Caenorhabditis</taxon>
    </lineage>
</organism>
<reference key="1">
    <citation type="submission" date="1992-09" db="EMBL/GenBank/DDBJ databases">
        <title>Complete nucleotide sequence of a cDNA coding for a p34-cdc2-like protein from Caenorhabiditis elegans.</title>
        <authorList>
            <person name="Ferraz C."/>
            <person name="Thierry-Mieg D."/>
            <person name="Le Peuch C.J."/>
        </authorList>
    </citation>
    <scope>NUCLEOTIDE SEQUENCE [MRNA]</scope>
    <source>
        <strain>Bristol N2</strain>
    </source>
</reference>
<reference key="2">
    <citation type="journal article" date="1994" name="Mol. Gen. Genet.">
        <title>The identification of a Caenorhabditis elegans homolog of p34cdc2 kinase.</title>
        <authorList>
            <person name="Mori H."/>
            <person name="Palmer R.E."/>
            <person name="Sternberg P.W."/>
        </authorList>
    </citation>
    <scope>NUCLEOTIDE SEQUENCE [MRNA]</scope>
</reference>
<reference key="3">
    <citation type="journal article" date="1999" name="Development">
        <title>The Caenorhabditis elegans gene ncc-1 encodes a cdc2-related kinase required for M phase in meiotic and mitotic cell divisions, but not for S phase.</title>
        <authorList>
            <person name="Boxem M."/>
            <person name="Srinivasan D.G."/>
            <person name="van den Heuvel S."/>
        </authorList>
    </citation>
    <scope>NUCLEOTIDE SEQUENCE [MRNA]</scope>
    <source>
        <strain>Bristol N2</strain>
    </source>
</reference>
<reference key="4">
    <citation type="journal article" date="1994" name="Nature">
        <title>2.2 Mb of contiguous nucleotide sequence from chromosome III of C. elegans.</title>
        <authorList>
            <person name="Wilson R."/>
            <person name="Ainscough R."/>
            <person name="Anderson K."/>
            <person name="Baynes C."/>
            <person name="Berks M."/>
            <person name="Bonfield J."/>
            <person name="Burton J."/>
            <person name="Connell M."/>
            <person name="Copsey T."/>
            <person name="Cooper J."/>
            <person name="Coulson A."/>
            <person name="Craxton M."/>
            <person name="Dear S."/>
            <person name="Du Z."/>
            <person name="Durbin R."/>
            <person name="Favello A."/>
            <person name="Fraser A."/>
            <person name="Fulton L."/>
            <person name="Gardner A."/>
            <person name="Green P."/>
            <person name="Hawkins T."/>
            <person name="Hillier L."/>
            <person name="Jier M."/>
            <person name="Johnston L."/>
            <person name="Jones M."/>
            <person name="Kershaw J."/>
            <person name="Kirsten J."/>
            <person name="Laisster N."/>
            <person name="Latreille P."/>
            <person name="Lightning J."/>
            <person name="Lloyd C."/>
            <person name="Mortimore B."/>
            <person name="O'Callaghan M."/>
            <person name="Parsons J."/>
            <person name="Percy C."/>
            <person name="Rifken L."/>
            <person name="Roopra A."/>
            <person name="Saunders D."/>
            <person name="Shownkeen R."/>
            <person name="Sims M."/>
            <person name="Smaldon N."/>
            <person name="Smith A."/>
            <person name="Smith M."/>
            <person name="Sonnhammer E."/>
            <person name="Staden R."/>
            <person name="Sulston J."/>
            <person name="Thierry-Mieg J."/>
            <person name="Thomas K."/>
            <person name="Vaudin M."/>
            <person name="Vaughan K."/>
            <person name="Waterston R."/>
            <person name="Watson A."/>
            <person name="Weinstock L."/>
            <person name="Wilkinson-Sproat J."/>
            <person name="Wohldman P."/>
        </authorList>
    </citation>
    <scope>NUCLEOTIDE SEQUENCE [LARGE SCALE GENOMIC DNA]</scope>
    <source>
        <strain>Bristol N2</strain>
    </source>
</reference>
<reference key="5">
    <citation type="journal article" date="1998" name="Science">
        <title>Genome sequence of the nematode C. elegans: a platform for investigating biology.</title>
        <authorList>
            <consortium name="The C. elegans sequencing consortium"/>
        </authorList>
    </citation>
    <scope>NUCLEOTIDE SEQUENCE [LARGE SCALE GENOMIC DNA]</scope>
    <source>
        <strain>Bristol N2</strain>
    </source>
</reference>
<reference key="6">
    <citation type="journal article" date="2006" name="Curr. Biol.">
        <title>The conserved kinases CDK-1, GSK-3, KIN-19, and MBK-2 promote OMA-1 destruction to regulate the oocyte-to-embryo transition in C. elegans.</title>
        <authorList>
            <person name="Shirayama M."/>
            <person name="Soto M.C."/>
            <person name="Ishidate T."/>
            <person name="Kim S."/>
            <person name="Nakamura K."/>
            <person name="Bei Y."/>
            <person name="van den Heuvel S."/>
            <person name="Mello C.C."/>
        </authorList>
    </citation>
    <scope>INTERACTION WITH CKS-1</scope>
    <scope>ACTIVITY REGULATION</scope>
    <scope>MUTAGENESIS OF ILE-173</scope>
</reference>
<reference key="7">
    <citation type="journal article" date="2010" name="Mol. Biol. Cell">
        <title>NPP-16/Nup50 function and CDK-1 inactivation are associated with anoxia-induced prophase arrest in Caenorhabditis elegans.</title>
        <authorList>
            <person name="Hajeri V.A."/>
            <person name="Little B.A."/>
            <person name="Ladage M.L."/>
            <person name="Padilla P.A."/>
        </authorList>
    </citation>
    <scope>FUNCTION</scope>
    <scope>SUBCELLULAR LOCATION</scope>
    <scope>PHOSPHORYLATION</scope>
</reference>
<evidence type="ECO:0000250" key="1"/>
<evidence type="ECO:0000250" key="2">
    <source>
        <dbReference type="UniProtKB" id="P06493"/>
    </source>
</evidence>
<evidence type="ECO:0000255" key="3">
    <source>
        <dbReference type="PROSITE-ProRule" id="PRU00159"/>
    </source>
</evidence>
<evidence type="ECO:0000255" key="4">
    <source>
        <dbReference type="PROSITE-ProRule" id="PRU10027"/>
    </source>
</evidence>
<evidence type="ECO:0000269" key="5">
    <source>
    </source>
</evidence>
<evidence type="ECO:0000269" key="6">
    <source>
    </source>
</evidence>
<evidence type="ECO:0000305" key="7"/>
<dbReference type="EC" id="2.7.11.22"/>
<dbReference type="EC" id="2.7.11.23"/>
<dbReference type="EMBL" id="X68384">
    <property type="protein sequence ID" value="CAA48455.1"/>
    <property type="molecule type" value="mRNA"/>
</dbReference>
<dbReference type="EMBL" id="S75262">
    <property type="protein sequence ID" value="AAC60520.1"/>
    <property type="molecule type" value="mRNA"/>
</dbReference>
<dbReference type="EMBL" id="AF129109">
    <property type="protein sequence ID" value="AAD37119.1"/>
    <property type="molecule type" value="mRNA"/>
</dbReference>
<dbReference type="EMBL" id="Z27079">
    <property type="protein sequence ID" value="CAA81590.1"/>
    <property type="molecule type" value="Genomic_DNA"/>
</dbReference>
<dbReference type="PIR" id="S41003">
    <property type="entry name" value="S41003"/>
</dbReference>
<dbReference type="RefSeq" id="NP_001022747.1">
    <property type="nucleotide sequence ID" value="NM_001027576.6"/>
</dbReference>
<dbReference type="SMR" id="P34556"/>
<dbReference type="BioGRID" id="41569">
    <property type="interactions" value="15"/>
</dbReference>
<dbReference type="DIP" id="DIP-26477N"/>
<dbReference type="FunCoup" id="P34556">
    <property type="interactions" value="2513"/>
</dbReference>
<dbReference type="IntAct" id="P34556">
    <property type="interactions" value="4"/>
</dbReference>
<dbReference type="STRING" id="6239.T05G5.3.2"/>
<dbReference type="iPTMnet" id="P34556"/>
<dbReference type="PaxDb" id="6239-T05G5.3.2"/>
<dbReference type="PeptideAtlas" id="P34556"/>
<dbReference type="EnsemblMetazoa" id="T05G5.3.1">
    <property type="protein sequence ID" value="T05G5.3.1"/>
    <property type="gene ID" value="WBGene00000405"/>
</dbReference>
<dbReference type="GeneID" id="176374"/>
<dbReference type="KEGG" id="cel:CELE_T05G5.3"/>
<dbReference type="UCSC" id="T05G5.3.1">
    <property type="organism name" value="c. elegans"/>
</dbReference>
<dbReference type="AGR" id="WB:WBGene00000405"/>
<dbReference type="CTD" id="176374"/>
<dbReference type="WormBase" id="T05G5.3">
    <property type="protein sequence ID" value="CE00315"/>
    <property type="gene ID" value="WBGene00000405"/>
    <property type="gene designation" value="cdk-1"/>
</dbReference>
<dbReference type="eggNOG" id="KOG0594">
    <property type="taxonomic scope" value="Eukaryota"/>
</dbReference>
<dbReference type="GeneTree" id="ENSGT00940000153335"/>
<dbReference type="HOGENOM" id="CLU_000288_181_1_1"/>
<dbReference type="InParanoid" id="P34556"/>
<dbReference type="OMA" id="HEYLADI"/>
<dbReference type="OrthoDB" id="1732493at2759"/>
<dbReference type="PhylomeDB" id="P34556"/>
<dbReference type="BRENDA" id="2.7.11.22">
    <property type="organism ID" value="1045"/>
</dbReference>
<dbReference type="Reactome" id="R-CEL-110056">
    <property type="pathway name" value="MAPK3 (ERK1) activation"/>
</dbReference>
<dbReference type="Reactome" id="R-CEL-2299718">
    <property type="pathway name" value="Condensation of Prophase Chromosomes"/>
</dbReference>
<dbReference type="Reactome" id="R-CEL-2500257">
    <property type="pathway name" value="Resolution of Sister Chromatid Cohesion"/>
</dbReference>
<dbReference type="Reactome" id="R-CEL-2565942">
    <property type="pathway name" value="Regulation of PLK1 Activity at G2/M Transition"/>
</dbReference>
<dbReference type="Reactome" id="R-CEL-2980767">
    <property type="pathway name" value="Activation of NIMA Kinases NEK9, NEK6, NEK7"/>
</dbReference>
<dbReference type="Reactome" id="R-CEL-4419969">
    <property type="pathway name" value="Depolymerization of the Nuclear Lamina"/>
</dbReference>
<dbReference type="Reactome" id="R-CEL-5687128">
    <property type="pathway name" value="MAPK6/MAPK4 signaling"/>
</dbReference>
<dbReference type="Reactome" id="R-CEL-6804114">
    <property type="pathway name" value="TP53 Regulates Transcription of Genes Involved in G2 Cell Cycle Arrest"/>
</dbReference>
<dbReference type="Reactome" id="R-CEL-69273">
    <property type="pathway name" value="Cyclin A/B1/B2 associated events during G2/M transition"/>
</dbReference>
<dbReference type="Reactome" id="R-CEL-69478">
    <property type="pathway name" value="G2/M DNA replication checkpoint"/>
</dbReference>
<dbReference type="Reactome" id="R-CEL-8878166">
    <property type="pathway name" value="Transcriptional regulation by RUNX2"/>
</dbReference>
<dbReference type="Reactome" id="R-CEL-9833482">
    <property type="pathway name" value="PKR-mediated signaling"/>
</dbReference>
<dbReference type="SignaLink" id="P34556"/>
<dbReference type="PRO" id="PR:P34556"/>
<dbReference type="Proteomes" id="UP000001940">
    <property type="component" value="Chromosome III"/>
</dbReference>
<dbReference type="Bgee" id="WBGene00000405">
    <property type="expression patterns" value="Expressed in germ line (C elegans) and 4 other cell types or tissues"/>
</dbReference>
<dbReference type="GO" id="GO:0005813">
    <property type="term" value="C:centrosome"/>
    <property type="evidence" value="ECO:0007669"/>
    <property type="project" value="UniProtKB-SubCell"/>
</dbReference>
<dbReference type="GO" id="GO:0005694">
    <property type="term" value="C:chromosome"/>
    <property type="evidence" value="ECO:0007669"/>
    <property type="project" value="UniProtKB-SubCell"/>
</dbReference>
<dbReference type="GO" id="GO:0005737">
    <property type="term" value="C:cytoplasm"/>
    <property type="evidence" value="ECO:0000314"/>
    <property type="project" value="UniProtKB"/>
</dbReference>
<dbReference type="GO" id="GO:0005634">
    <property type="term" value="C:nucleus"/>
    <property type="evidence" value="ECO:0000314"/>
    <property type="project" value="WormBase"/>
</dbReference>
<dbReference type="GO" id="GO:0005524">
    <property type="term" value="F:ATP binding"/>
    <property type="evidence" value="ECO:0007669"/>
    <property type="project" value="UniProtKB-KW"/>
</dbReference>
<dbReference type="GO" id="GO:0004693">
    <property type="term" value="F:cyclin-dependent protein serine/threonine kinase activity"/>
    <property type="evidence" value="ECO:0000314"/>
    <property type="project" value="WormBase"/>
</dbReference>
<dbReference type="GO" id="GO:0019901">
    <property type="term" value="F:protein kinase binding"/>
    <property type="evidence" value="ECO:0000353"/>
    <property type="project" value="UniProtKB"/>
</dbReference>
<dbReference type="GO" id="GO:0106310">
    <property type="term" value="F:protein serine kinase activity"/>
    <property type="evidence" value="ECO:0007669"/>
    <property type="project" value="RHEA"/>
</dbReference>
<dbReference type="GO" id="GO:0008353">
    <property type="term" value="F:RNA polymerase II CTD heptapeptide repeat kinase activity"/>
    <property type="evidence" value="ECO:0007669"/>
    <property type="project" value="UniProtKB-EC"/>
</dbReference>
<dbReference type="GO" id="GO:0008595">
    <property type="term" value="P:anterior/posterior axis specification, embryo"/>
    <property type="evidence" value="ECO:0000316"/>
    <property type="project" value="WormBase"/>
</dbReference>
<dbReference type="GO" id="GO:0051301">
    <property type="term" value="P:cell division"/>
    <property type="evidence" value="ECO:0000315"/>
    <property type="project" value="UniProtKB"/>
</dbReference>
<dbReference type="GO" id="GO:0000086">
    <property type="term" value="P:G2/M transition of mitotic cell cycle"/>
    <property type="evidence" value="ECO:0000318"/>
    <property type="project" value="GO_Central"/>
</dbReference>
<dbReference type="GO" id="GO:0051321">
    <property type="term" value="P:meiotic cell cycle"/>
    <property type="evidence" value="ECO:0000315"/>
    <property type="project" value="WormBase"/>
</dbReference>
<dbReference type="GO" id="GO:0000278">
    <property type="term" value="P:mitotic cell cycle"/>
    <property type="evidence" value="ECO:0000315"/>
    <property type="project" value="WormBase"/>
</dbReference>
<dbReference type="GO" id="GO:0007095">
    <property type="term" value="P:mitotic G2 DNA damage checkpoint signaling"/>
    <property type="evidence" value="ECO:0000318"/>
    <property type="project" value="GO_Central"/>
</dbReference>
<dbReference type="GO" id="GO:0045138">
    <property type="term" value="P:nematode male tail tip morphogenesis"/>
    <property type="evidence" value="ECO:0000315"/>
    <property type="project" value="UniProtKB"/>
</dbReference>
<dbReference type="GO" id="GO:0001556">
    <property type="term" value="P:oocyte maturation"/>
    <property type="evidence" value="ECO:0000315"/>
    <property type="project" value="WormBase"/>
</dbReference>
<dbReference type="GO" id="GO:0051446">
    <property type="term" value="P:positive regulation of meiotic cell cycle"/>
    <property type="evidence" value="ECO:0000315"/>
    <property type="project" value="UniProtKB"/>
</dbReference>
<dbReference type="GO" id="GO:0045836">
    <property type="term" value="P:positive regulation of meiotic nuclear division"/>
    <property type="evidence" value="ECO:0000315"/>
    <property type="project" value="WormBase"/>
</dbReference>
<dbReference type="GO" id="GO:0032436">
    <property type="term" value="P:positive regulation of proteasomal ubiquitin-dependent protein catabolic process"/>
    <property type="evidence" value="ECO:0000315"/>
    <property type="project" value="WormBase"/>
</dbReference>
<dbReference type="CDD" id="cd07861">
    <property type="entry name" value="STKc_CDK1_euk"/>
    <property type="match status" value="1"/>
</dbReference>
<dbReference type="FunFam" id="1.10.510.10:FF:000706">
    <property type="entry name" value="Cyclin-dependent kinase 1"/>
    <property type="match status" value="1"/>
</dbReference>
<dbReference type="FunFam" id="3.30.200.20:FF:000027">
    <property type="entry name" value="Putative Cyclin-dependent kinase 1"/>
    <property type="match status" value="1"/>
</dbReference>
<dbReference type="Gene3D" id="3.30.200.20">
    <property type="entry name" value="Phosphorylase Kinase, domain 1"/>
    <property type="match status" value="1"/>
</dbReference>
<dbReference type="Gene3D" id="1.10.510.10">
    <property type="entry name" value="Transferase(Phosphotransferase) domain 1"/>
    <property type="match status" value="1"/>
</dbReference>
<dbReference type="InterPro" id="IPR050108">
    <property type="entry name" value="CDK"/>
</dbReference>
<dbReference type="InterPro" id="IPR011009">
    <property type="entry name" value="Kinase-like_dom_sf"/>
</dbReference>
<dbReference type="InterPro" id="IPR000719">
    <property type="entry name" value="Prot_kinase_dom"/>
</dbReference>
<dbReference type="InterPro" id="IPR017441">
    <property type="entry name" value="Protein_kinase_ATP_BS"/>
</dbReference>
<dbReference type="InterPro" id="IPR008271">
    <property type="entry name" value="Ser/Thr_kinase_AS"/>
</dbReference>
<dbReference type="PANTHER" id="PTHR24056">
    <property type="entry name" value="CELL DIVISION PROTEIN KINASE"/>
    <property type="match status" value="1"/>
</dbReference>
<dbReference type="PANTHER" id="PTHR24056:SF334">
    <property type="entry name" value="CYCLIN-DEPENDENT KINASE 1"/>
    <property type="match status" value="1"/>
</dbReference>
<dbReference type="Pfam" id="PF00069">
    <property type="entry name" value="Pkinase"/>
    <property type="match status" value="1"/>
</dbReference>
<dbReference type="SMART" id="SM00220">
    <property type="entry name" value="S_TKc"/>
    <property type="match status" value="1"/>
</dbReference>
<dbReference type="SUPFAM" id="SSF56112">
    <property type="entry name" value="Protein kinase-like (PK-like)"/>
    <property type="match status" value="1"/>
</dbReference>
<dbReference type="PROSITE" id="PS00107">
    <property type="entry name" value="PROTEIN_KINASE_ATP"/>
    <property type="match status" value="1"/>
</dbReference>
<dbReference type="PROSITE" id="PS50011">
    <property type="entry name" value="PROTEIN_KINASE_DOM"/>
    <property type="match status" value="1"/>
</dbReference>
<dbReference type="PROSITE" id="PS00108">
    <property type="entry name" value="PROTEIN_KINASE_ST"/>
    <property type="match status" value="1"/>
</dbReference>
<accession>P34556</accession>
<sequence>MDPIREGEVAHEGDSVYTLNDFTKLEKIGEGTYGVVYKGKNRRTNAMVAMKKIRLESEDEGVPSTAVREISLLKELQHPNVVGLEAVIMQENRLFLIFEFLSFDLKRYMDQLGKDEYLPLETLKSYTFQILQAMCFCHQRRVIHRDLKPQNLLVDNNGAIKLADFGLARAIGIPIRVYTHEVVTLWYRAPEILMGAQRYSMGVDMWSIGCIFAEMATKKPLFQGDSEIDELFRIFRVLGTPTELEWNGVESLPDYKATFPKWRENFLRDKFYDKKTGKHLLDDTAFSLLEGLLIYDPSLRLNAKKALVHPYFDNMDTSKLPAGNYRGELELF</sequence>
<protein>
    <recommendedName>
        <fullName>Cyclin-dependent kinase 1</fullName>
        <shortName>CDK1</shortName>
        <ecNumber>2.7.11.22</ecNumber>
        <ecNumber>2.7.11.23</ecNumber>
    </recommendedName>
    <alternativeName>
        <fullName>Cell division control protein 2 homolog</fullName>
    </alternativeName>
    <alternativeName>
        <fullName>Cell division protein kinase 1</fullName>
    </alternativeName>
    <alternativeName>
        <fullName>p34 protein kinase</fullName>
    </alternativeName>
</protein>
<proteinExistence type="evidence at protein level"/>
<feature type="chain" id="PRO_0000085738" description="Cyclin-dependent kinase 1">
    <location>
        <begin position="1"/>
        <end position="332"/>
    </location>
</feature>
<feature type="domain" description="Protein kinase" evidence="3">
    <location>
        <begin position="22"/>
        <end position="312"/>
    </location>
</feature>
<feature type="active site" description="Proton acceptor" evidence="3 4">
    <location>
        <position position="146"/>
    </location>
</feature>
<feature type="binding site" evidence="3">
    <location>
        <begin position="28"/>
        <end position="36"/>
    </location>
    <ligand>
        <name>ATP</name>
        <dbReference type="ChEBI" id="CHEBI:30616"/>
    </ligand>
</feature>
<feature type="binding site" evidence="3">
    <location>
        <position position="51"/>
    </location>
    <ligand>
        <name>ATP</name>
        <dbReference type="ChEBI" id="CHEBI:30616"/>
    </ligand>
</feature>
<feature type="modified residue" description="Phosphothreonine" evidence="1">
    <location>
        <position position="32"/>
    </location>
</feature>
<feature type="modified residue" description="Phosphotyrosine" evidence="1">
    <location>
        <position position="33"/>
    </location>
</feature>
<feature type="mutagenesis site" description="No effect on cks-1 binding." evidence="5">
    <original>I</original>
    <variation>F</variation>
    <location>
        <position position="173"/>
    </location>
</feature>
<feature type="sequence conflict" description="In Ref. 2; AAC60520." evidence="7" ref="2">
    <original>R</original>
    <variation>P</variation>
    <location>
        <position position="176"/>
    </location>
</feature>
<keyword id="KW-0067">ATP-binding</keyword>
<keyword id="KW-0131">Cell cycle</keyword>
<keyword id="KW-0132">Cell division</keyword>
<keyword id="KW-0158">Chromosome</keyword>
<keyword id="KW-0963">Cytoplasm</keyword>
<keyword id="KW-0206">Cytoskeleton</keyword>
<keyword id="KW-0418">Kinase</keyword>
<keyword id="KW-0498">Mitosis</keyword>
<keyword id="KW-0547">Nucleotide-binding</keyword>
<keyword id="KW-0539">Nucleus</keyword>
<keyword id="KW-0597">Phosphoprotein</keyword>
<keyword id="KW-1185">Reference proteome</keyword>
<keyword id="KW-0723">Serine/threonine-protein kinase</keyword>
<keyword id="KW-0808">Transferase</keyword>
<gene>
    <name type="primary">cdk-1</name>
    <name type="synonym">ncc-1</name>
    <name type="ORF">T05G5.3</name>
</gene>
<comment type="function">
    <text evidence="2 6">Plays a key role in the control of the eukaryotic cell cycle (By similarity). Required for entry into S-phase and mitosis (By similarity). Acts as a component of the kinase complex that phosphorylates the repetitive C-terminus of RNA polymerase II (By similarity). May function in concert with npp-16 to arrest prophase blastomeres in response to anoxia (PubMed:20053678).</text>
</comment>
<comment type="catalytic activity">
    <reaction>
        <text>L-seryl-[protein] + ATP = O-phospho-L-seryl-[protein] + ADP + H(+)</text>
        <dbReference type="Rhea" id="RHEA:17989"/>
        <dbReference type="Rhea" id="RHEA-COMP:9863"/>
        <dbReference type="Rhea" id="RHEA-COMP:11604"/>
        <dbReference type="ChEBI" id="CHEBI:15378"/>
        <dbReference type="ChEBI" id="CHEBI:29999"/>
        <dbReference type="ChEBI" id="CHEBI:30616"/>
        <dbReference type="ChEBI" id="CHEBI:83421"/>
        <dbReference type="ChEBI" id="CHEBI:456216"/>
        <dbReference type="EC" id="2.7.11.22"/>
    </reaction>
</comment>
<comment type="catalytic activity">
    <reaction>
        <text>L-threonyl-[protein] + ATP = O-phospho-L-threonyl-[protein] + ADP + H(+)</text>
        <dbReference type="Rhea" id="RHEA:46608"/>
        <dbReference type="Rhea" id="RHEA-COMP:11060"/>
        <dbReference type="Rhea" id="RHEA-COMP:11605"/>
        <dbReference type="ChEBI" id="CHEBI:15378"/>
        <dbReference type="ChEBI" id="CHEBI:30013"/>
        <dbReference type="ChEBI" id="CHEBI:30616"/>
        <dbReference type="ChEBI" id="CHEBI:61977"/>
        <dbReference type="ChEBI" id="CHEBI:456216"/>
        <dbReference type="EC" id="2.7.11.22"/>
    </reaction>
</comment>
<comment type="catalytic activity">
    <reaction>
        <text>[DNA-directed RNA polymerase] + ATP = phospho-[DNA-directed RNA polymerase] + ADP + H(+)</text>
        <dbReference type="Rhea" id="RHEA:10216"/>
        <dbReference type="Rhea" id="RHEA-COMP:11321"/>
        <dbReference type="Rhea" id="RHEA-COMP:11322"/>
        <dbReference type="ChEBI" id="CHEBI:15378"/>
        <dbReference type="ChEBI" id="CHEBI:30616"/>
        <dbReference type="ChEBI" id="CHEBI:43176"/>
        <dbReference type="ChEBI" id="CHEBI:68546"/>
        <dbReference type="ChEBI" id="CHEBI:456216"/>
        <dbReference type="EC" id="2.7.11.23"/>
    </reaction>
</comment>
<comment type="activity regulation">
    <text evidence="5">Phosphorylation both activates and inactivates the enzyme depending on the site of phosphorylation.</text>
</comment>
<comment type="subunit">
    <text evidence="5">Forms a stable but non-covalent complex with a regulatory subunit and with a cyclin. Interacts with cks-1.</text>
</comment>
<comment type="subcellular location">
    <subcellularLocation>
        <location evidence="6">Nucleus</location>
    </subcellularLocation>
    <subcellularLocation>
        <location evidence="2">Cytoplasm</location>
        <location evidence="2">Cytoskeleton</location>
        <location evidence="2">Microtubule organizing center</location>
        <location evidence="2">Centrosome</location>
    </subcellularLocation>
    <subcellularLocation>
        <location evidence="6">Cytoplasm</location>
    </subcellularLocation>
    <subcellularLocation>
        <location evidence="6">Chromosome</location>
    </subcellularLocation>
    <text evidence="6">Localization to chromosomes is enhanced in embryos exposed to anoxia (PubMed:20053678). When phosphorylated, localized to the nuclei of blastomeres during interphase, but not during late prophase (PubMed:20053678).</text>
</comment>
<comment type="PTM">
    <text evidence="6">Phosphorylated.</text>
</comment>
<comment type="similarity">
    <text evidence="7">Belongs to the protein kinase superfamily. CMGC Ser/Thr protein kinase family. CDC2/CDKX subfamily.</text>
</comment>